<feature type="chain" id="PRO_1000128686" description="Large ribosomal subunit protein bL27">
    <location>
        <begin position="1"/>
        <end position="85"/>
    </location>
</feature>
<feature type="region of interest" description="Disordered" evidence="2">
    <location>
        <begin position="1"/>
        <end position="22"/>
    </location>
</feature>
<sequence>MAHKKAGGSTKNGRDSESKRLGVKRFGGESVLAGNIIVRQRGTRFHAGDNMGIGKDHTLFALKDGKVQFDVKGPKNRKFVSIVAE</sequence>
<comment type="similarity">
    <text evidence="1">Belongs to the bacterial ribosomal protein bL27 family.</text>
</comment>
<gene>
    <name evidence="1" type="primary">rpmA</name>
    <name type="ordered locus">MADE_1003340</name>
</gene>
<proteinExistence type="inferred from homology"/>
<name>RL27_ALTMD</name>
<organism>
    <name type="scientific">Alteromonas mediterranea (strain DSM 17117 / CIP 110805 / LMG 28347 / Deep ecotype)</name>
    <dbReference type="NCBI Taxonomy" id="1774373"/>
    <lineage>
        <taxon>Bacteria</taxon>
        <taxon>Pseudomonadati</taxon>
        <taxon>Pseudomonadota</taxon>
        <taxon>Gammaproteobacteria</taxon>
        <taxon>Alteromonadales</taxon>
        <taxon>Alteromonadaceae</taxon>
        <taxon>Alteromonas/Salinimonas group</taxon>
        <taxon>Alteromonas</taxon>
    </lineage>
</organism>
<evidence type="ECO:0000255" key="1">
    <source>
        <dbReference type="HAMAP-Rule" id="MF_00539"/>
    </source>
</evidence>
<evidence type="ECO:0000256" key="2">
    <source>
        <dbReference type="SAM" id="MobiDB-lite"/>
    </source>
</evidence>
<evidence type="ECO:0000305" key="3"/>
<dbReference type="EMBL" id="CP001103">
    <property type="protein sequence ID" value="AEA96816.1"/>
    <property type="molecule type" value="Genomic_DNA"/>
</dbReference>
<dbReference type="RefSeq" id="WP_012517170.1">
    <property type="nucleotide sequence ID" value="NC_011138.3"/>
</dbReference>
<dbReference type="SMR" id="B4RZH4"/>
<dbReference type="GeneID" id="78253884"/>
<dbReference type="KEGG" id="amc:MADE_1003340"/>
<dbReference type="HOGENOM" id="CLU_095424_4_1_6"/>
<dbReference type="Proteomes" id="UP000001870">
    <property type="component" value="Chromosome"/>
</dbReference>
<dbReference type="GO" id="GO:0022625">
    <property type="term" value="C:cytosolic large ribosomal subunit"/>
    <property type="evidence" value="ECO:0007669"/>
    <property type="project" value="TreeGrafter"/>
</dbReference>
<dbReference type="GO" id="GO:0003735">
    <property type="term" value="F:structural constituent of ribosome"/>
    <property type="evidence" value="ECO:0007669"/>
    <property type="project" value="InterPro"/>
</dbReference>
<dbReference type="GO" id="GO:0006412">
    <property type="term" value="P:translation"/>
    <property type="evidence" value="ECO:0007669"/>
    <property type="project" value="UniProtKB-UniRule"/>
</dbReference>
<dbReference type="FunFam" id="2.40.50.100:FF:000001">
    <property type="entry name" value="50S ribosomal protein L27"/>
    <property type="match status" value="1"/>
</dbReference>
<dbReference type="Gene3D" id="2.40.50.100">
    <property type="match status" value="1"/>
</dbReference>
<dbReference type="HAMAP" id="MF_00539">
    <property type="entry name" value="Ribosomal_bL27"/>
    <property type="match status" value="1"/>
</dbReference>
<dbReference type="InterPro" id="IPR001684">
    <property type="entry name" value="Ribosomal_bL27"/>
</dbReference>
<dbReference type="InterPro" id="IPR018261">
    <property type="entry name" value="Ribosomal_bL27_CS"/>
</dbReference>
<dbReference type="NCBIfam" id="TIGR00062">
    <property type="entry name" value="L27"/>
    <property type="match status" value="1"/>
</dbReference>
<dbReference type="PANTHER" id="PTHR15893:SF0">
    <property type="entry name" value="LARGE RIBOSOMAL SUBUNIT PROTEIN BL27M"/>
    <property type="match status" value="1"/>
</dbReference>
<dbReference type="PANTHER" id="PTHR15893">
    <property type="entry name" value="RIBOSOMAL PROTEIN L27"/>
    <property type="match status" value="1"/>
</dbReference>
<dbReference type="Pfam" id="PF01016">
    <property type="entry name" value="Ribosomal_L27"/>
    <property type="match status" value="1"/>
</dbReference>
<dbReference type="PRINTS" id="PR00063">
    <property type="entry name" value="RIBOSOMALL27"/>
</dbReference>
<dbReference type="SUPFAM" id="SSF110324">
    <property type="entry name" value="Ribosomal L27 protein-like"/>
    <property type="match status" value="1"/>
</dbReference>
<dbReference type="PROSITE" id="PS00831">
    <property type="entry name" value="RIBOSOMAL_L27"/>
    <property type="match status" value="1"/>
</dbReference>
<keyword id="KW-0687">Ribonucleoprotein</keyword>
<keyword id="KW-0689">Ribosomal protein</keyword>
<accession>B4RZH4</accession>
<accession>F2G8B5</accession>
<protein>
    <recommendedName>
        <fullName evidence="1">Large ribosomal subunit protein bL27</fullName>
    </recommendedName>
    <alternativeName>
        <fullName evidence="3">50S ribosomal protein L27</fullName>
    </alternativeName>
</protein>
<reference key="1">
    <citation type="journal article" date="2008" name="ISME J.">
        <title>Comparative genomics of two ecotypes of the marine planktonic copiotroph Alteromonas macleodii suggests alternative lifestyles associated with different kinds of particulate organic matter.</title>
        <authorList>
            <person name="Ivars-Martinez E."/>
            <person name="Martin-Cuadrado A.-B."/>
            <person name="D'Auria G."/>
            <person name="Mira A."/>
            <person name="Ferriera S."/>
            <person name="Johnson J."/>
            <person name="Friedman R."/>
            <person name="Rodriguez-Valera F."/>
        </authorList>
    </citation>
    <scope>NUCLEOTIDE SEQUENCE [LARGE SCALE GENOMIC DNA]</scope>
    <source>
        <strain>DSM 17117 / CIP 110805 / LMG 28347 / Deep ecotype</strain>
    </source>
</reference>